<dbReference type="EC" id="2.7.7.60"/>
<dbReference type="EMBL" id="BA000003">
    <property type="protein sequence ID" value="BAB13118.1"/>
    <property type="molecule type" value="Genomic_DNA"/>
</dbReference>
<dbReference type="RefSeq" id="NP_240232.1">
    <property type="nucleotide sequence ID" value="NC_002528.1"/>
</dbReference>
<dbReference type="RefSeq" id="WP_010896106.1">
    <property type="nucleotide sequence ID" value="NC_002528.1"/>
</dbReference>
<dbReference type="SMR" id="P57495"/>
<dbReference type="STRING" id="563178.BUAP5A_413"/>
<dbReference type="EnsemblBacteria" id="BAB13118">
    <property type="protein sequence ID" value="BAB13118"/>
    <property type="gene ID" value="BAB13118"/>
</dbReference>
<dbReference type="KEGG" id="buc:BU420"/>
<dbReference type="PATRIC" id="fig|107806.10.peg.429"/>
<dbReference type="eggNOG" id="COG1211">
    <property type="taxonomic scope" value="Bacteria"/>
</dbReference>
<dbReference type="HOGENOM" id="CLU_061281_3_1_6"/>
<dbReference type="UniPathway" id="UPA00056">
    <property type="reaction ID" value="UER00093"/>
</dbReference>
<dbReference type="Proteomes" id="UP000001806">
    <property type="component" value="Chromosome"/>
</dbReference>
<dbReference type="GO" id="GO:0050518">
    <property type="term" value="F:2-C-methyl-D-erythritol 4-phosphate cytidylyltransferase activity"/>
    <property type="evidence" value="ECO:0007669"/>
    <property type="project" value="UniProtKB-UniRule"/>
</dbReference>
<dbReference type="GO" id="GO:0019288">
    <property type="term" value="P:isopentenyl diphosphate biosynthetic process, methylerythritol 4-phosphate pathway"/>
    <property type="evidence" value="ECO:0007669"/>
    <property type="project" value="UniProtKB-UniRule"/>
</dbReference>
<dbReference type="CDD" id="cd02516">
    <property type="entry name" value="CDP-ME_synthetase"/>
    <property type="match status" value="1"/>
</dbReference>
<dbReference type="FunFam" id="3.90.550.10:FF:000003">
    <property type="entry name" value="2-C-methyl-D-erythritol 4-phosphate cytidylyltransferase"/>
    <property type="match status" value="1"/>
</dbReference>
<dbReference type="Gene3D" id="3.90.550.10">
    <property type="entry name" value="Spore Coat Polysaccharide Biosynthesis Protein SpsA, Chain A"/>
    <property type="match status" value="1"/>
</dbReference>
<dbReference type="HAMAP" id="MF_00108">
    <property type="entry name" value="IspD"/>
    <property type="match status" value="1"/>
</dbReference>
<dbReference type="InterPro" id="IPR001228">
    <property type="entry name" value="IspD"/>
</dbReference>
<dbReference type="InterPro" id="IPR034683">
    <property type="entry name" value="IspD/TarI"/>
</dbReference>
<dbReference type="InterPro" id="IPR050088">
    <property type="entry name" value="IspD/TarI_cytidylyltransf_bact"/>
</dbReference>
<dbReference type="InterPro" id="IPR018294">
    <property type="entry name" value="ISPD_synthase_CS"/>
</dbReference>
<dbReference type="InterPro" id="IPR029044">
    <property type="entry name" value="Nucleotide-diphossugar_trans"/>
</dbReference>
<dbReference type="NCBIfam" id="TIGR00453">
    <property type="entry name" value="ispD"/>
    <property type="match status" value="1"/>
</dbReference>
<dbReference type="PANTHER" id="PTHR32125">
    <property type="entry name" value="2-C-METHYL-D-ERYTHRITOL 4-PHOSPHATE CYTIDYLYLTRANSFERASE, CHLOROPLASTIC"/>
    <property type="match status" value="1"/>
</dbReference>
<dbReference type="PANTHER" id="PTHR32125:SF4">
    <property type="entry name" value="2-C-METHYL-D-ERYTHRITOL 4-PHOSPHATE CYTIDYLYLTRANSFERASE, CHLOROPLASTIC"/>
    <property type="match status" value="1"/>
</dbReference>
<dbReference type="Pfam" id="PF01128">
    <property type="entry name" value="IspD"/>
    <property type="match status" value="1"/>
</dbReference>
<dbReference type="SUPFAM" id="SSF53448">
    <property type="entry name" value="Nucleotide-diphospho-sugar transferases"/>
    <property type="match status" value="1"/>
</dbReference>
<dbReference type="PROSITE" id="PS01295">
    <property type="entry name" value="ISPD"/>
    <property type="match status" value="1"/>
</dbReference>
<protein>
    <recommendedName>
        <fullName>2-C-methyl-D-erythritol 4-phosphate cytidylyltransferase</fullName>
        <ecNumber>2.7.7.60</ecNumber>
    </recommendedName>
    <alternativeName>
        <fullName>4-diphosphocytidyl-2C-methyl-D-erythritol synthase</fullName>
    </alternativeName>
    <alternativeName>
        <fullName>MEP cytidylyltransferase</fullName>
        <shortName>MCT</shortName>
    </alternativeName>
</protein>
<reference key="1">
    <citation type="journal article" date="2000" name="Nature">
        <title>Genome sequence of the endocellular bacterial symbiont of aphids Buchnera sp. APS.</title>
        <authorList>
            <person name="Shigenobu S."/>
            <person name="Watanabe H."/>
            <person name="Hattori M."/>
            <person name="Sakaki Y."/>
            <person name="Ishikawa H."/>
        </authorList>
    </citation>
    <scope>NUCLEOTIDE SEQUENCE [LARGE SCALE GENOMIC DNA]</scope>
    <source>
        <strain>APS</strain>
    </source>
</reference>
<proteinExistence type="inferred from homology"/>
<accession>P57495</accession>
<sequence>MILVNLFEPKIIAIVPAAGIGSRMKIDVPKQYIKIQNRTILEHTLTTLLLHPNIVQIIVSLNKKDNYFHKLSISSNFRIISVVGGEKRINSVLSGLIVVKNVDWVIVHDAVRPCLSYKDLEKLISIIKKNPVGAILARPVSDTIKYSNLKQKKAVYTVYRKNLWHALTPQLFQVELLKNCLKKIIKDQISVTDEASALEYCGYNPLLVLGSCRNIKITWPEDLVLANFYLKNHIIDK</sequence>
<gene>
    <name type="primary">ispD</name>
    <name type="ordered locus">BU420</name>
</gene>
<comment type="function">
    <text evidence="1">Catalyzes the formation of 4-diphosphocytidyl-2-C-methyl-D-erythritol from CTP and 2-C-methyl-D-erythritol 4-phosphate (MEP).</text>
</comment>
<comment type="catalytic activity">
    <reaction>
        <text>2-C-methyl-D-erythritol 4-phosphate + CTP + H(+) = 4-CDP-2-C-methyl-D-erythritol + diphosphate</text>
        <dbReference type="Rhea" id="RHEA:13429"/>
        <dbReference type="ChEBI" id="CHEBI:15378"/>
        <dbReference type="ChEBI" id="CHEBI:33019"/>
        <dbReference type="ChEBI" id="CHEBI:37563"/>
        <dbReference type="ChEBI" id="CHEBI:57823"/>
        <dbReference type="ChEBI" id="CHEBI:58262"/>
        <dbReference type="EC" id="2.7.7.60"/>
    </reaction>
</comment>
<comment type="pathway">
    <text>Isoprenoid biosynthesis; isopentenyl diphosphate biosynthesis via DXP pathway; isopentenyl diphosphate from 1-deoxy-D-xylulose 5-phosphate: step 2/6.</text>
</comment>
<comment type="subunit">
    <text evidence="1">Homodimer.</text>
</comment>
<comment type="similarity">
    <text evidence="2">Belongs to the IspD/TarI cytidylyltransferase family. IspD subfamily.</text>
</comment>
<feature type="chain" id="PRO_0000075557" description="2-C-methyl-D-erythritol 4-phosphate cytidylyltransferase">
    <location>
        <begin position="1"/>
        <end position="237"/>
    </location>
</feature>
<feature type="site" description="Transition state stabilizer" evidence="1">
    <location>
        <position position="23"/>
    </location>
</feature>
<feature type="site" description="Transition state stabilizer" evidence="1">
    <location>
        <position position="30"/>
    </location>
</feature>
<feature type="site" description="Positions MEP for the nucleophilic attack" evidence="1">
    <location>
        <position position="160"/>
    </location>
</feature>
<feature type="site" description="Positions MEP for the nucleophilic attack" evidence="1">
    <location>
        <position position="216"/>
    </location>
</feature>
<keyword id="KW-0414">Isoprene biosynthesis</keyword>
<keyword id="KW-0548">Nucleotidyltransferase</keyword>
<keyword id="KW-1185">Reference proteome</keyword>
<keyword id="KW-0808">Transferase</keyword>
<name>ISPD_BUCAI</name>
<organism>
    <name type="scientific">Buchnera aphidicola subsp. Acyrthosiphon pisum (strain APS)</name>
    <name type="common">Acyrthosiphon pisum symbiotic bacterium</name>
    <dbReference type="NCBI Taxonomy" id="107806"/>
    <lineage>
        <taxon>Bacteria</taxon>
        <taxon>Pseudomonadati</taxon>
        <taxon>Pseudomonadota</taxon>
        <taxon>Gammaproteobacteria</taxon>
        <taxon>Enterobacterales</taxon>
        <taxon>Erwiniaceae</taxon>
        <taxon>Buchnera</taxon>
    </lineage>
</organism>
<evidence type="ECO:0000250" key="1"/>
<evidence type="ECO:0000305" key="2"/>